<comment type="function">
    <text evidence="1">Forms a proton-selective ion channel that is necessary for the efficient release of the viral genome during virus entry. After attaching to the cell surface, the virion enters the cell by endocytosis. Acidification of the endosome triggers M2 ion channel activity. The influx of protons into virion interior is believed to disrupt interactions between the viral ribonucleoprotein (RNP), matrix protein 1 (M1), and lipid bilayers, thereby freeing the viral genome from interaction with viral proteins and enabling RNA segments to migrate to the host cell nucleus, where influenza virus RNA transcription and replication occur. Also plays a role in viral proteins secretory pathway. Elevates the intravesicular pH of normally acidic compartments, such as trans-Golgi network, preventing newly formed hemagglutinin from premature switching to the fusion-active conformation.</text>
</comment>
<comment type="activity regulation">
    <text>The M2 protein from most influenza A strains is inhibited by amantadine and rimantadine, resulting in viral uncoating incapacity. Emergence of amantadine-resistant variants is usually rapid.</text>
</comment>
<comment type="subunit">
    <text evidence="1">Homotetramer; composed of two disulfide-linked dimers held together by non-covalent interactions. May interact with matrix protein 1.</text>
</comment>
<comment type="subcellular location">
    <subcellularLocation>
        <location evidence="1">Virion membrane</location>
    </subcellularLocation>
    <subcellularLocation>
        <location evidence="1">Host apical cell membrane</location>
        <topology evidence="1">Single-pass type III membrane protein</topology>
    </subcellularLocation>
    <text evidence="1">Abundantly expressed at the apical plasma membrane in infected polarized epithelial cells, in close proximity to budding and assembled virions. Minor component of virions (only 16-20 molecules/virion).</text>
</comment>
<comment type="alternative products">
    <event type="alternative splicing"/>
    <isoform>
        <id>Q2VC90-1</id>
        <name>M2</name>
        <sequence type="displayed"/>
    </isoform>
    <isoform>
        <id>Q2VC89-1</id>
        <name>M1</name>
        <sequence type="external"/>
    </isoform>
    <text>Only the first 9 residues are shared by the 2 isoforms.</text>
</comment>
<comment type="domain">
    <text evidence="1">Cytoplasmic tail plays an important role in virion assembly and morphogenesis.</text>
</comment>
<comment type="miscellaneous">
    <text evidence="1">When the channel is activated, one or more imidazole moieties of His-37 probably become bi-protonated.</text>
</comment>
<comment type="miscellaneous">
    <text>SC35 was derived from A/Seal/Massachussetts/1/80 (H7N7) by serial passages in chicken embryo cells, thereby acquiring a multibasic cleavage site in its hemagglutinin (HA) and becoming 100% lethal for chickens. SC35 was then passaged 11 times in mouse lung, yielding the mouse-adapted variant SC35M.</text>
</comment>
<comment type="similarity">
    <text evidence="1">Belongs to the influenza viruses matrix protein M2 family.</text>
</comment>
<gene>
    <name evidence="1" type="primary">M</name>
</gene>
<sequence length="97" mass="11181">MSLLTEVETPIRNGWECKCSDSSDPLVIAASIIGILHLILWILDHLFFKCIYRRLKYGLKRGPSTEGVPESMREEYRQEQQSAVDVDDSHFVNIELE</sequence>
<feature type="chain" id="PRO_0000326369" description="Matrix protein 2">
    <location>
        <begin position="1"/>
        <end position="97"/>
    </location>
</feature>
<feature type="topological domain" description="Virion surface" evidence="1">
    <location>
        <begin position="1"/>
        <end position="22"/>
    </location>
</feature>
<feature type="transmembrane region" description="Helical; Signal-anchor for type III membrane protein" evidence="1">
    <location>
        <begin position="23"/>
        <end position="43"/>
    </location>
</feature>
<feature type="topological domain" description="Intravirion" evidence="1">
    <location>
        <begin position="44"/>
        <end position="97"/>
    </location>
</feature>
<feature type="region of interest" description="Disordered" evidence="2">
    <location>
        <begin position="60"/>
        <end position="84"/>
    </location>
</feature>
<feature type="site" description="Essential for channel activity, possibly by being protonated during channel activation, and by forming the channel gate and the selective filter" evidence="1">
    <location>
        <position position="37"/>
    </location>
</feature>
<feature type="site" description="Seems to be involved in pH gating" evidence="1">
    <location>
        <position position="41"/>
    </location>
</feature>
<feature type="modified residue" description="Phosphoserine; by host" evidence="1">
    <location>
        <position position="64"/>
    </location>
</feature>
<feature type="modified residue" description="Phosphoserine; by host" evidence="1">
    <location>
        <position position="82"/>
    </location>
</feature>
<feature type="lipid moiety-binding region" description="S-palmitoyl cysteine; by host" evidence="1">
    <location>
        <position position="50"/>
    </location>
</feature>
<feature type="disulfide bond" description="Interchain (with C-17)" evidence="1">
    <location>
        <position position="17"/>
    </location>
</feature>
<feature type="disulfide bond" description="Interchain (with C-19)" evidence="1">
    <location>
        <position position="19"/>
    </location>
</feature>
<organismHost>
    <name type="scientific">Aves</name>
    <dbReference type="NCBI Taxonomy" id="8782"/>
</organismHost>
<organismHost>
    <name type="scientific">Equus caballus</name>
    <name type="common">Horse</name>
    <dbReference type="NCBI Taxonomy" id="9796"/>
</organismHost>
<organismHost>
    <name type="scientific">Homo sapiens</name>
    <name type="common">Human</name>
    <dbReference type="NCBI Taxonomy" id="9606"/>
</organismHost>
<organismHost>
    <name type="scientific">Phocidae</name>
    <name type="common">true seals</name>
    <dbReference type="NCBI Taxonomy" id="9709"/>
</organismHost>
<protein>
    <recommendedName>
        <fullName evidence="1">Matrix protein 2</fullName>
    </recommendedName>
    <alternativeName>
        <fullName evidence="1">Proton channel protein M2</fullName>
    </alternativeName>
</protein>
<accession>Q2VC90</accession>
<keyword id="KW-0025">Alternative splicing</keyword>
<keyword id="KW-1015">Disulfide bond</keyword>
<keyword id="KW-1032">Host cell membrane</keyword>
<keyword id="KW-1043">Host membrane</keyword>
<keyword id="KW-0945">Host-virus interaction</keyword>
<keyword id="KW-0375">Hydrogen ion transport</keyword>
<keyword id="KW-1083">Inhibition of host autophagy by virus</keyword>
<keyword id="KW-0407">Ion channel</keyword>
<keyword id="KW-0406">Ion transport</keyword>
<keyword id="KW-0449">Lipoprotein</keyword>
<keyword id="KW-0472">Membrane</keyword>
<keyword id="KW-0564">Palmitate</keyword>
<keyword id="KW-0597">Phosphoprotein</keyword>
<keyword id="KW-0735">Signal-anchor</keyword>
<keyword id="KW-0812">Transmembrane</keyword>
<keyword id="KW-1133">Transmembrane helix</keyword>
<keyword id="KW-0813">Transport</keyword>
<keyword id="KW-1182">Viral ion channel</keyword>
<keyword id="KW-0946">Virion</keyword>
<proteinExistence type="inferred from homology"/>
<name>M2_I80A2</name>
<reference key="1">
    <citation type="journal article" date="2005" name="Proc. Natl. Acad. Sci. U.S.A.">
        <title>The viral polymerase mediates adaptation of an avian influenza virus to a mammalian host.</title>
        <authorList>
            <person name="Gabriel G."/>
            <person name="Dauber B."/>
            <person name="Wolff T."/>
            <person name="Planz O."/>
            <person name="Klenk H.D."/>
            <person name="Stech J."/>
        </authorList>
    </citation>
    <scope>NUCLEOTIDE SEQUENCE [GENOMIC RNA]</scope>
    <source>
        <strain>SC35M mouse-adapted</strain>
    </source>
</reference>
<evidence type="ECO:0000255" key="1">
    <source>
        <dbReference type="HAMAP-Rule" id="MF_04069"/>
    </source>
</evidence>
<evidence type="ECO:0000256" key="2">
    <source>
        <dbReference type="SAM" id="MobiDB-lite"/>
    </source>
</evidence>
<organism>
    <name type="scientific">Influenza A virus (strain A/Seal/Massachusetts/1/1980 H7N7)</name>
    <dbReference type="NCBI Taxonomy" id="384493"/>
    <lineage>
        <taxon>Viruses</taxon>
        <taxon>Riboviria</taxon>
        <taxon>Orthornavirae</taxon>
        <taxon>Negarnaviricota</taxon>
        <taxon>Polyploviricotina</taxon>
        <taxon>Insthoviricetes</taxon>
        <taxon>Articulavirales</taxon>
        <taxon>Orthomyxoviridae</taxon>
        <taxon>Alphainfluenzavirus</taxon>
        <taxon>Alphainfluenzavirus influenzae</taxon>
        <taxon>Influenza A virus</taxon>
    </lineage>
</organism>
<dbReference type="EMBL" id="DQ266100">
    <property type="protein sequence ID" value="ABB90274.1"/>
    <property type="molecule type" value="Genomic_RNA"/>
</dbReference>
<dbReference type="SMR" id="Q2VC90"/>
<dbReference type="Proteomes" id="UP000008576">
    <property type="component" value="Genome"/>
</dbReference>
<dbReference type="GO" id="GO:0020002">
    <property type="term" value="C:host cell plasma membrane"/>
    <property type="evidence" value="ECO:0007669"/>
    <property type="project" value="UniProtKB-SubCell"/>
</dbReference>
<dbReference type="GO" id="GO:0016020">
    <property type="term" value="C:membrane"/>
    <property type="evidence" value="ECO:0007669"/>
    <property type="project" value="UniProtKB-UniRule"/>
</dbReference>
<dbReference type="GO" id="GO:0055036">
    <property type="term" value="C:virion membrane"/>
    <property type="evidence" value="ECO:0007669"/>
    <property type="project" value="UniProtKB-SubCell"/>
</dbReference>
<dbReference type="GO" id="GO:0005216">
    <property type="term" value="F:monoatomic ion channel activity"/>
    <property type="evidence" value="ECO:0007669"/>
    <property type="project" value="UniProtKB-UniRule"/>
</dbReference>
<dbReference type="GO" id="GO:0015078">
    <property type="term" value="F:proton transmembrane transporter activity"/>
    <property type="evidence" value="ECO:0007669"/>
    <property type="project" value="UniProtKB-UniRule"/>
</dbReference>
<dbReference type="GO" id="GO:0051259">
    <property type="term" value="P:protein complex oligomerization"/>
    <property type="evidence" value="ECO:0007669"/>
    <property type="project" value="UniProtKB-UniRule"/>
</dbReference>
<dbReference type="GO" id="GO:0044694">
    <property type="term" value="P:symbiont genome entry into host cell via pore formation in plasma membrane"/>
    <property type="evidence" value="ECO:0007669"/>
    <property type="project" value="UniProtKB-UniRule"/>
</dbReference>
<dbReference type="GO" id="GO:0140321">
    <property type="term" value="P:symbiont-mediated suppression of host autophagy"/>
    <property type="evidence" value="ECO:0007669"/>
    <property type="project" value="UniProtKB-KW"/>
</dbReference>
<dbReference type="Gene3D" id="6.10.250.1640">
    <property type="match status" value="1"/>
</dbReference>
<dbReference type="HAMAP" id="MF_04069">
    <property type="entry name" value="INFV_M2"/>
    <property type="match status" value="1"/>
</dbReference>
<dbReference type="InterPro" id="IPR002089">
    <property type="entry name" value="Flu_M2"/>
</dbReference>
<dbReference type="Pfam" id="PF00599">
    <property type="entry name" value="Flu_M2"/>
    <property type="match status" value="1"/>
</dbReference>